<protein>
    <recommendedName>
        <fullName>cAMP-dependent protein kinase catalytic subunit alpha</fullName>
        <shortName>PKA C-alpha</shortName>
        <ecNumber>2.7.11.11</ecNumber>
    </recommendedName>
</protein>
<reference key="1">
    <citation type="journal article" date="1987" name="Eur. J. Biochem.">
        <title>Multiple mRNA species code for the catalytic subunit of the cAMP-dependent protein kinase from LLC-PK1 cells. Evidence for two forms of the catalytic subunit.</title>
        <authorList>
            <person name="Adavani S.R."/>
            <person name="Schwarz M."/>
            <person name="Showers M.O."/>
            <person name="Maurer R.A."/>
            <person name="Hemmings B.A."/>
        </authorList>
    </citation>
    <scope>NUCLEOTIDE SEQUENCE [MRNA] OF 195-351</scope>
</reference>
<reference key="2">
    <citation type="journal article" date="1998" name="Protein Sci.">
        <title>A conserved deamidation site at Asn 2 in the catalytic subunit of mammalian cAMP-dependent protein kinase detected by capillary LC-MS and tandem mass spectrometry.</title>
        <authorList>
            <person name="Jedrzejewski P.T."/>
            <person name="Girod A."/>
            <person name="Tholey A."/>
            <person name="Koenig N."/>
            <person name="Thullner S."/>
            <person name="Kinzel V."/>
            <person name="Bossemeyer D."/>
        </authorList>
    </citation>
    <scope>PROTEIN SEQUENCE OF 2-8</scope>
    <scope>MYRISTOYLATION AT GLY-2</scope>
    <scope>DEAMIDATION AT ASN-3</scope>
</reference>
<reference key="3">
    <citation type="journal article" date="2000" name="J. Cell Biol.">
        <title>Intracellular distribution of mammalian protein kinase A catalytic subunit altered by conserved Asn2 deamidation.</title>
        <authorList>
            <person name="Pepperkok R."/>
            <person name="Hotz-Wagenblatt A."/>
            <person name="Koenig N."/>
            <person name="Girod A."/>
            <person name="Bossemeyer D."/>
            <person name="Kinzel V."/>
        </authorList>
    </citation>
    <scope>DEAMIDATION AT ASN-3</scope>
    <scope>SUBCELLULAR LOCATION</scope>
</reference>
<reference key="4">
    <citation type="journal article" date="1993" name="Biochemistry">
        <title>Crystal structure of the catalytic subunit of cAMP-dependent protein kinase complexed with MgATP and peptide inhibitor.</title>
        <authorList>
            <person name="Zheng J."/>
            <person name="Knighton D.R."/>
            <person name="ten Eyck L.F."/>
            <person name="Karlsson R."/>
            <person name="Xuong N.-H."/>
            <person name="Taylor S.S."/>
            <person name="Sowadski J.M."/>
        </authorList>
    </citation>
    <scope>X-RAY CRYSTALLOGRAPHY (2.9 ANGSTROMS) IN COMPLEX WITH PKIA</scope>
</reference>
<gene>
    <name type="primary">PRKACA</name>
</gene>
<proteinExistence type="evidence at protein level"/>
<sequence>MGNAAAAKKGSEQESVKEFLAKAKEDFLKKWENPAQNTAHLDQFERIKTLGTGSFGRVMLVKHKETGNHFAMKILDKQKVVKLKQIEHTLNEKRILQAVNFPFLVKLEYSFKDNSNLYMVMEYVPGGEMFSHLRRIGRFSEPHARFYAAQIVLTFEYLHSLDLIYRDLKPENLLIDQQGYIQVTDFGFAKRVKGRTWTLCGTPEYLAPEIILSKGYNKAVDWWALGVLIYEMAAGYPPFFADQPIQIYEKIVSGKVRFPSHFSSDLKDLLRNLLQVDLTKRFGNLKNGVNDIKNHKWFATTDWIAIYQRKVEAPFIPKFKGPGDTSNFDDYEEEEIRVSINEKCGKEFSEF</sequence>
<dbReference type="EC" id="2.7.11.11"/>
<dbReference type="EMBL" id="X07617">
    <property type="protein sequence ID" value="CAA30470.1"/>
    <property type="molecule type" value="mRNA"/>
</dbReference>
<dbReference type="PIR" id="S00086">
    <property type="entry name" value="S00086"/>
</dbReference>
<dbReference type="PDB" id="1CDK">
    <property type="method" value="X-ray"/>
    <property type="resolution" value="2.00 A"/>
    <property type="chains" value="A/B=2-351"/>
</dbReference>
<dbReference type="PDB" id="1CMK">
    <property type="method" value="X-ray"/>
    <property type="resolution" value="2.90 A"/>
    <property type="chains" value="E=2-351"/>
</dbReference>
<dbReference type="PDB" id="1CTP">
    <property type="method" value="X-ray"/>
    <property type="resolution" value="2.90 A"/>
    <property type="chains" value="E=2-351"/>
</dbReference>
<dbReference type="PDBsum" id="1CDK"/>
<dbReference type="PDBsum" id="1CMK"/>
<dbReference type="PDBsum" id="1CTP"/>
<dbReference type="SMR" id="P36887"/>
<dbReference type="FunCoup" id="P36887">
    <property type="interactions" value="2004"/>
</dbReference>
<dbReference type="IntAct" id="P36887">
    <property type="interactions" value="1"/>
</dbReference>
<dbReference type="STRING" id="9823.ENSSSCP00000035101"/>
<dbReference type="iPTMnet" id="P36887"/>
<dbReference type="PaxDb" id="9823-ENSSSCP00000014641"/>
<dbReference type="PeptideAtlas" id="P36887"/>
<dbReference type="eggNOG" id="KOG0616">
    <property type="taxonomic scope" value="Eukaryota"/>
</dbReference>
<dbReference type="InParanoid" id="P36887"/>
<dbReference type="EvolutionaryTrace" id="P36887"/>
<dbReference type="Proteomes" id="UP000008227">
    <property type="component" value="Unplaced"/>
</dbReference>
<dbReference type="Proteomes" id="UP000314985">
    <property type="component" value="Unplaced"/>
</dbReference>
<dbReference type="Proteomes" id="UP000694570">
    <property type="component" value="Unplaced"/>
</dbReference>
<dbReference type="Proteomes" id="UP000694571">
    <property type="component" value="Unplaced"/>
</dbReference>
<dbReference type="Proteomes" id="UP000694720">
    <property type="component" value="Unplaced"/>
</dbReference>
<dbReference type="Proteomes" id="UP000694722">
    <property type="component" value="Unplaced"/>
</dbReference>
<dbReference type="Proteomes" id="UP000694723">
    <property type="component" value="Unplaced"/>
</dbReference>
<dbReference type="Proteomes" id="UP000694724">
    <property type="component" value="Unplaced"/>
</dbReference>
<dbReference type="Proteomes" id="UP000694725">
    <property type="component" value="Unplaced"/>
</dbReference>
<dbReference type="Proteomes" id="UP000694726">
    <property type="component" value="Unplaced"/>
</dbReference>
<dbReference type="Proteomes" id="UP000694727">
    <property type="component" value="Unplaced"/>
</dbReference>
<dbReference type="Proteomes" id="UP000694728">
    <property type="component" value="Unplaced"/>
</dbReference>
<dbReference type="GO" id="GO:0001669">
    <property type="term" value="C:acrosomal vesicle"/>
    <property type="evidence" value="ECO:0000250"/>
    <property type="project" value="UniProtKB"/>
</dbReference>
<dbReference type="GO" id="GO:0005952">
    <property type="term" value="C:cAMP-dependent protein kinase complex"/>
    <property type="evidence" value="ECO:0000318"/>
    <property type="project" value="GO_Central"/>
</dbReference>
<dbReference type="GO" id="GO:0005737">
    <property type="term" value="C:cytoplasm"/>
    <property type="evidence" value="ECO:0000315"/>
    <property type="project" value="AgBase"/>
</dbReference>
<dbReference type="GO" id="GO:0005829">
    <property type="term" value="C:cytosol"/>
    <property type="evidence" value="ECO:0000318"/>
    <property type="project" value="GO_Central"/>
</dbReference>
<dbReference type="GO" id="GO:0042585">
    <property type="term" value="C:germinal vesicle"/>
    <property type="evidence" value="ECO:0000315"/>
    <property type="project" value="AgBase"/>
</dbReference>
<dbReference type="GO" id="GO:0005739">
    <property type="term" value="C:mitochondrion"/>
    <property type="evidence" value="ECO:0007669"/>
    <property type="project" value="UniProtKB-SubCell"/>
</dbReference>
<dbReference type="GO" id="GO:0005634">
    <property type="term" value="C:nucleus"/>
    <property type="evidence" value="ECO:0000250"/>
    <property type="project" value="UniProtKB"/>
</dbReference>
<dbReference type="GO" id="GO:0048471">
    <property type="term" value="C:perinuclear region of cytoplasm"/>
    <property type="evidence" value="ECO:0000250"/>
    <property type="project" value="UniProtKB"/>
</dbReference>
<dbReference type="GO" id="GO:0005886">
    <property type="term" value="C:plasma membrane"/>
    <property type="evidence" value="ECO:0007669"/>
    <property type="project" value="UniProtKB-SubCell"/>
</dbReference>
<dbReference type="GO" id="GO:0036126">
    <property type="term" value="C:sperm flagellum"/>
    <property type="evidence" value="ECO:0000250"/>
    <property type="project" value="UniProtKB"/>
</dbReference>
<dbReference type="GO" id="GO:0005524">
    <property type="term" value="F:ATP binding"/>
    <property type="evidence" value="ECO:0007669"/>
    <property type="project" value="UniProtKB-KW"/>
</dbReference>
<dbReference type="GO" id="GO:0004691">
    <property type="term" value="F:cAMP-dependent protein kinase activity"/>
    <property type="evidence" value="ECO:0000315"/>
    <property type="project" value="AgBase"/>
</dbReference>
<dbReference type="GO" id="GO:0034237">
    <property type="term" value="F:protein kinase A regulatory subunit binding"/>
    <property type="evidence" value="ECO:0000318"/>
    <property type="project" value="GO_Central"/>
</dbReference>
<dbReference type="GO" id="GO:0106310">
    <property type="term" value="F:protein serine kinase activity"/>
    <property type="evidence" value="ECO:0007669"/>
    <property type="project" value="RHEA"/>
</dbReference>
<dbReference type="GO" id="GO:0004674">
    <property type="term" value="F:protein serine/threonine kinase activity"/>
    <property type="evidence" value="ECO:0000250"/>
    <property type="project" value="UniProtKB"/>
</dbReference>
<dbReference type="GO" id="GO:0034605">
    <property type="term" value="P:cellular response to heat"/>
    <property type="evidence" value="ECO:0000250"/>
    <property type="project" value="UniProtKB"/>
</dbReference>
<dbReference type="GO" id="GO:1904145">
    <property type="term" value="P:negative regulation of meiotic cell cycle process involved in oocyte maturation"/>
    <property type="evidence" value="ECO:0000315"/>
    <property type="project" value="AgBase"/>
</dbReference>
<dbReference type="GO" id="GO:1904262">
    <property type="term" value="P:negative regulation of TORC1 signaling"/>
    <property type="evidence" value="ECO:0000250"/>
    <property type="project" value="UniProtKB"/>
</dbReference>
<dbReference type="GO" id="GO:0007165">
    <property type="term" value="P:signal transduction"/>
    <property type="evidence" value="ECO:0000318"/>
    <property type="project" value="GO_Central"/>
</dbReference>
<dbReference type="CDD" id="cd14209">
    <property type="entry name" value="STKc_PKA"/>
    <property type="match status" value="1"/>
</dbReference>
<dbReference type="FunFam" id="3.30.200.20:FF:000005">
    <property type="entry name" value="cAMP-dependent protein kinase catalytic subunit"/>
    <property type="match status" value="1"/>
</dbReference>
<dbReference type="FunFam" id="1.10.510.10:FF:000005">
    <property type="entry name" value="cAMP-dependent protein kinase catalytic subunit alpha"/>
    <property type="match status" value="1"/>
</dbReference>
<dbReference type="Gene3D" id="3.30.200.20">
    <property type="entry name" value="Phosphorylase Kinase, domain 1"/>
    <property type="match status" value="1"/>
</dbReference>
<dbReference type="Gene3D" id="1.10.510.10">
    <property type="entry name" value="Transferase(Phosphotransferase) domain 1"/>
    <property type="match status" value="1"/>
</dbReference>
<dbReference type="IDEAL" id="IID50158"/>
<dbReference type="InterPro" id="IPR000961">
    <property type="entry name" value="AGC-kinase_C"/>
</dbReference>
<dbReference type="InterPro" id="IPR011009">
    <property type="entry name" value="Kinase-like_dom_sf"/>
</dbReference>
<dbReference type="InterPro" id="IPR000719">
    <property type="entry name" value="Prot_kinase_dom"/>
</dbReference>
<dbReference type="InterPro" id="IPR017441">
    <property type="entry name" value="Protein_kinase_ATP_BS"/>
</dbReference>
<dbReference type="InterPro" id="IPR008271">
    <property type="entry name" value="Ser/Thr_kinase_AS"/>
</dbReference>
<dbReference type="InterPro" id="IPR044109">
    <property type="entry name" value="STKc_PKA"/>
</dbReference>
<dbReference type="PANTHER" id="PTHR24353:SF82">
    <property type="entry name" value="CAMP-DEPENDENT PROTEIN KINASE CATALYTIC SUBUNIT ALPHA"/>
    <property type="match status" value="1"/>
</dbReference>
<dbReference type="PANTHER" id="PTHR24353">
    <property type="entry name" value="CYCLIC NUCLEOTIDE-DEPENDENT PROTEIN KINASE"/>
    <property type="match status" value="1"/>
</dbReference>
<dbReference type="Pfam" id="PF00069">
    <property type="entry name" value="Pkinase"/>
    <property type="match status" value="1"/>
</dbReference>
<dbReference type="SMART" id="SM00133">
    <property type="entry name" value="S_TK_X"/>
    <property type="match status" value="1"/>
</dbReference>
<dbReference type="SMART" id="SM00220">
    <property type="entry name" value="S_TKc"/>
    <property type="match status" value="1"/>
</dbReference>
<dbReference type="SUPFAM" id="SSF56112">
    <property type="entry name" value="Protein kinase-like (PK-like)"/>
    <property type="match status" value="1"/>
</dbReference>
<dbReference type="PROSITE" id="PS51285">
    <property type="entry name" value="AGC_KINASE_CTER"/>
    <property type="match status" value="1"/>
</dbReference>
<dbReference type="PROSITE" id="PS00107">
    <property type="entry name" value="PROTEIN_KINASE_ATP"/>
    <property type="match status" value="1"/>
</dbReference>
<dbReference type="PROSITE" id="PS50011">
    <property type="entry name" value="PROTEIN_KINASE_DOM"/>
    <property type="match status" value="1"/>
</dbReference>
<dbReference type="PROSITE" id="PS00108">
    <property type="entry name" value="PROTEIN_KINASE_ST"/>
    <property type="match status" value="1"/>
</dbReference>
<comment type="function">
    <text evidence="2 3 4">Phosphorylates a large number of substrates in the cytoplasm and the nucleus (By similarity). Phosphorylates CDC25B, ABL1, NFKB1, CLDN3, PSMC5/RPT6, PJA2, RYR2, RORA, SOX9 and VASP (By similarity). Regulates the abundance of compartmentalized pools of its regulatory subunits through phosphorylation of PJA2 which binds and ubiquitinates these subunits, leading to their subsequent proteolysis. RORA is activated by phosphorylation. Required for glucose-mediated adipogenic differentiation increase and osteogenic differentiation inhibition from osteoblasts (By similarity). Involved in chondrogenesis by mediating phosphorylation of SOX9 (By similarity). Involved in the regulation of platelets in response to thrombin and collagen; maintains circulating platelets in a resting state by phosphorylating proteins in numerous platelet inhibitory pathways when in complex with NF-kappa-B (NFKB1 and NFKB2) and I-kappa-B-alpha (NFKBIA), but thrombin and collagen disrupt these complexes and free active PRKACA stimulates platelets and leads to platelet aggregation by phosphorylating VASP. RYR2 channel activity is potentiated by phosphorylation in presence of luminal Ca(2+), leading to reduced amplitude and increased frequency of store overload-induced Ca(2+) release (SOICR) characterized by an increased rate of Ca(2+) release and propagation velocity of spontaneous Ca(2+) waves, despite reduced wave amplitude and resting cytosolic Ca(2+). PSMC5/RPT6 activation by phosphorylation stimulates proteasome. Negatively regulates tight junctions (TJs) in ovarian cancer cells via CLDN3 phosphorylation. NFKB1 phosphorylation promotes NF-kappa-B p50-p50 DNA binding. Required for phosphorylation of GLI transcription factors which inhibits them and prevents transcriptional activation of Hedgehog signaling pathway target genes (By similarity). GLI transcription factor phosphorylation is inhibited by interaction of PRKACA with SMO which sequesters PRKACA at the cell membrane (By similarity). Involved in embryonic development by down-regulating the Hedgehog (Hh) signaling pathway that determines embryo pattern formation and morphogenesis most probably through the regulation of OFD1 in ciliogenesis (By similarity). Prevents meiosis resumption in prophase-arrested oocytes via CDC25B inactivation by phosphorylation (By similarity). May also regulate rapid eye movement (REM) sleep in the pedunculopontine tegmental (PPT) (By similarity). Phosphorylates APOBEC3G and AICDA. Phosphorylates HSF1; this phosphorylation promotes HSF1 nuclear localization and transcriptional activity upon heat shock (By similarity). Acts as a negative regulator of mTORC1 by mediating phosphorylation of RPTOR (By similarity).</text>
</comment>
<comment type="catalytic activity">
    <reaction>
        <text>L-seryl-[protein] + ATP = O-phospho-L-seryl-[protein] + ADP + H(+)</text>
        <dbReference type="Rhea" id="RHEA:17989"/>
        <dbReference type="Rhea" id="RHEA-COMP:9863"/>
        <dbReference type="Rhea" id="RHEA-COMP:11604"/>
        <dbReference type="ChEBI" id="CHEBI:15378"/>
        <dbReference type="ChEBI" id="CHEBI:29999"/>
        <dbReference type="ChEBI" id="CHEBI:30616"/>
        <dbReference type="ChEBI" id="CHEBI:83421"/>
        <dbReference type="ChEBI" id="CHEBI:456216"/>
        <dbReference type="EC" id="2.7.11.11"/>
    </reaction>
</comment>
<comment type="catalytic activity">
    <reaction>
        <text>L-threonyl-[protein] + ATP = O-phospho-L-threonyl-[protein] + ADP + H(+)</text>
        <dbReference type="Rhea" id="RHEA:46608"/>
        <dbReference type="Rhea" id="RHEA-COMP:11060"/>
        <dbReference type="Rhea" id="RHEA-COMP:11605"/>
        <dbReference type="ChEBI" id="CHEBI:15378"/>
        <dbReference type="ChEBI" id="CHEBI:30013"/>
        <dbReference type="ChEBI" id="CHEBI:30616"/>
        <dbReference type="ChEBI" id="CHEBI:61977"/>
        <dbReference type="ChEBI" id="CHEBI:456216"/>
        <dbReference type="EC" id="2.7.11.11"/>
    </reaction>
</comment>
<comment type="activity regulation">
    <text>Allosterically activated by various compounds, including ATP. Activated by cAMP; the nucleotide acts as a dynamic and allosteric activator by coupling the two lobes of apo PKA, enhancing the enzyme dynamics synchronously and priming it for catalysis.</text>
</comment>
<comment type="subunit">
    <text evidence="2 3">A number of inactive tetrameric holoenzymes are produced by the combination of homo- or heterodimers of the different regulatory subunits associated with two catalytic subunits. cAMP causes the dissociation of the inactive holoenzyme into a dimer of regulatory subunits bound to four cAMP and two free monomeric catalytic subunits. The cAMP-dependent protein kinase catalytic subunit binds PJA2. Activates cAMP-sensitive PKAI and PKAII holoenzymes by interacting with regulatory subunit (R) of PKA, PRKAR1A/PKR1 and PRKAR2A/PKR2, respectively. Interacts with NFKB1, NFKB2 and NFKBIA in platelets; these interactions are disrupted by thrombin and collagen. Binds to ABL1 in spermatozoa and with CDC25B in oocytes (By similarity). Interacts with APOBEC3G and AICDA (By similarity). Interacts with RAB13; downstream effector of RAB13 involved in tight junction assembly (By similarity). Found in a complex at least composed of MROH2B, PRKACA and TCP11 (By similarity). Interacts with MROH2B (By similarity). Interacts with HSF1 (By similarity). Interacts with TCP11 (By similarity). Interacts with TBC1D31; in the regulation of OFD1 (By similarity). Interacts in free form with SMO (via C-terminus); the interaction leads to sequestration of PRKACA at the membrane, preventing PRKACA-mediated phosphorylation of GLI transcription factors (By similarity).</text>
</comment>
<comment type="subcellular location">
    <subcellularLocation>
        <location evidence="9">Cytoplasm</location>
    </subcellularLocation>
    <subcellularLocation>
        <location evidence="3">Cell membrane</location>
    </subcellularLocation>
    <subcellularLocation>
        <location evidence="3">Membrane</location>
        <topology evidence="3">Lipid-anchor</topology>
    </subcellularLocation>
    <subcellularLocation>
        <location evidence="9">Nucleus</location>
    </subcellularLocation>
    <subcellularLocation>
        <location evidence="2">Mitochondrion</location>
    </subcellularLocation>
    <text evidence="2 3">Translocates into the nucleus (monomeric catalytic subunit). The inactive holoenzyme is found in the cytoplasm. Distributed throughout the cytoplasm in meiotically incompetent oocytes. Associated to mitochondrion as meiotic competence is acquired. Aggregates around the germinal vesicles (GV) at the immature GV stage oocytes (By similarity). Colocalizes with HSF1 in nuclear stress bodies (nSBs) upon heat shock (By similarity). Recruited to the cell membrane through interaction with SMO (By similarity).</text>
</comment>
<comment type="tissue specificity">
    <text>Ubiquitously expressed in mammalian tissues.</text>
</comment>
<comment type="PTM">
    <text evidence="2 3">Autophosphorylated. Phosphorylation is enhanced by vitamin K(2). Phosphorylated on threonine and serine residues. Phosphorylation on Thr-198 is required for full activity (By similarity). Phosphorylated at Tyr-331 by activated receptor tyrosine kinases EGFR and PDGFR; this increases catalytic efficiency (By similarity).</text>
</comment>
<comment type="PTM">
    <text evidence="8 9">Asn-3 is deaminated to Asp in more than 25% of the proteins, giving rise to 2 major isoelectric variants, called CB and CA respectively (0.4 pH unit change). Deamidation proceeds via the so-called beta-aspartyl shift mechanism and yields either 'D-Asp-2' (major) or 'D-isoAsp-2' (minor), in addition to L-isomers. Deamidation occurs after the addition of myristate. The Asn-3 form reaches a significantly larger nuclear/cytoplasmic ratio than the 'Asp-2' form.</text>
</comment>
<comment type="PTM">
    <text evidence="2">When myristoylated, Ser-11 is autophosphorylated probably in conjunction with deamidation of Asn-3.</text>
</comment>
<comment type="similarity">
    <text evidence="10">Belongs to the protein kinase superfamily. AGC Ser/Thr protein kinase family. cAMP subfamily.</text>
</comment>
<keyword id="KW-0002">3D-structure</keyword>
<keyword id="KW-0067">ATP-binding</keyword>
<keyword id="KW-0114">cAMP</keyword>
<keyword id="KW-1003">Cell membrane</keyword>
<keyword id="KW-0963">Cytoplasm</keyword>
<keyword id="KW-0903">Direct protein sequencing</keyword>
<keyword id="KW-0418">Kinase</keyword>
<keyword id="KW-0449">Lipoprotein</keyword>
<keyword id="KW-0472">Membrane</keyword>
<keyword id="KW-0496">Mitochondrion</keyword>
<keyword id="KW-0519">Myristate</keyword>
<keyword id="KW-0547">Nucleotide-binding</keyword>
<keyword id="KW-0539">Nucleus</keyword>
<keyword id="KW-0597">Phosphoprotein</keyword>
<keyword id="KW-1185">Reference proteome</keyword>
<keyword id="KW-0723">Serine/threonine-protein kinase</keyword>
<keyword id="KW-0808">Transferase</keyword>
<accession>P36887</accession>
<feature type="initiator methionine" description="Removed" evidence="9">
    <location>
        <position position="1"/>
    </location>
</feature>
<feature type="chain" id="PRO_0000086054" description="cAMP-dependent protein kinase catalytic subunit alpha">
    <location>
        <begin position="2"/>
        <end position="351"/>
    </location>
</feature>
<feature type="domain" description="Protein kinase" evidence="5">
    <location>
        <begin position="44"/>
        <end position="298"/>
    </location>
</feature>
<feature type="domain" description="AGC-kinase C-terminal" evidence="6">
    <location>
        <begin position="299"/>
        <end position="351"/>
    </location>
</feature>
<feature type="active site" description="Proton acceptor" evidence="5 7">
    <location>
        <position position="167"/>
    </location>
</feature>
<feature type="binding site">
    <location>
        <begin position="50"/>
        <end position="58"/>
    </location>
    <ligand>
        <name>ATP</name>
        <dbReference type="ChEBI" id="CHEBI:30616"/>
    </ligand>
</feature>
<feature type="binding site">
    <location>
        <position position="73"/>
    </location>
    <ligand>
        <name>ATP</name>
        <dbReference type="ChEBI" id="CHEBI:30616"/>
    </ligand>
</feature>
<feature type="binding site" evidence="5">
    <location>
        <begin position="122"/>
        <end position="128"/>
    </location>
    <ligand>
        <name>ATP</name>
        <dbReference type="ChEBI" id="CHEBI:30616"/>
    </ligand>
</feature>
<feature type="binding site" evidence="5">
    <location>
        <begin position="169"/>
        <end position="172"/>
    </location>
    <ligand>
        <name>ATP</name>
        <dbReference type="ChEBI" id="CHEBI:30616"/>
    </ligand>
</feature>
<feature type="modified residue" description="Deamidated asparagine; partial" evidence="8 9">
    <location>
        <position position="3"/>
    </location>
</feature>
<feature type="modified residue" description="Phosphoserine; by autocatalysis" evidence="2">
    <location>
        <position position="11"/>
    </location>
</feature>
<feature type="modified residue" description="Phosphothreonine" evidence="3">
    <location>
        <position position="49"/>
    </location>
</feature>
<feature type="modified residue" description="Phosphoserine" evidence="2">
    <location>
        <position position="140"/>
    </location>
</feature>
<feature type="modified residue" description="Phosphothreonine" evidence="3">
    <location>
        <position position="196"/>
    </location>
</feature>
<feature type="modified residue" description="Phosphothreonine; by PDPK1" evidence="1">
    <location>
        <position position="198"/>
    </location>
</feature>
<feature type="modified residue" description="Phosphotyrosine" evidence="2">
    <location>
        <position position="331"/>
    </location>
</feature>
<feature type="modified residue" description="Phosphoserine" evidence="1">
    <location>
        <position position="339"/>
    </location>
</feature>
<feature type="lipid moiety-binding region" description="N-myristoyl glycine" evidence="9">
    <location>
        <position position="2"/>
    </location>
</feature>
<feature type="strand" evidence="12">
    <location>
        <begin position="4"/>
        <end position="6"/>
    </location>
</feature>
<feature type="helix" evidence="11">
    <location>
        <begin position="11"/>
        <end position="32"/>
    </location>
</feature>
<feature type="helix" evidence="11">
    <location>
        <begin position="41"/>
        <end position="43"/>
    </location>
</feature>
<feature type="strand" evidence="11">
    <location>
        <begin position="44"/>
        <end position="52"/>
    </location>
</feature>
<feature type="strand" evidence="11">
    <location>
        <begin position="57"/>
        <end position="63"/>
    </location>
</feature>
<feature type="turn" evidence="11">
    <location>
        <begin position="64"/>
        <end position="66"/>
    </location>
</feature>
<feature type="strand" evidence="11">
    <location>
        <begin position="69"/>
        <end position="76"/>
    </location>
</feature>
<feature type="helix" evidence="11">
    <location>
        <begin position="77"/>
        <end position="82"/>
    </location>
</feature>
<feature type="helix" evidence="11">
    <location>
        <begin position="86"/>
        <end position="98"/>
    </location>
</feature>
<feature type="strand" evidence="11">
    <location>
        <begin position="107"/>
        <end position="112"/>
    </location>
</feature>
<feature type="strand" evidence="11">
    <location>
        <begin position="114"/>
        <end position="121"/>
    </location>
</feature>
<feature type="helix" evidence="11">
    <location>
        <begin position="129"/>
        <end position="136"/>
    </location>
</feature>
<feature type="helix" evidence="11">
    <location>
        <begin position="141"/>
        <end position="160"/>
    </location>
</feature>
<feature type="helix" evidence="11">
    <location>
        <begin position="170"/>
        <end position="172"/>
    </location>
</feature>
<feature type="strand" evidence="11">
    <location>
        <begin position="173"/>
        <end position="175"/>
    </location>
</feature>
<feature type="strand" evidence="11">
    <location>
        <begin position="181"/>
        <end position="183"/>
    </location>
</feature>
<feature type="helix" evidence="11">
    <location>
        <begin position="203"/>
        <end position="205"/>
    </location>
</feature>
<feature type="helix" evidence="11">
    <location>
        <begin position="208"/>
        <end position="211"/>
    </location>
</feature>
<feature type="helix" evidence="11">
    <location>
        <begin position="220"/>
        <end position="234"/>
    </location>
</feature>
<feature type="helix" evidence="11">
    <location>
        <begin position="244"/>
        <end position="253"/>
    </location>
</feature>
<feature type="helix" evidence="11">
    <location>
        <begin position="264"/>
        <end position="273"/>
    </location>
</feature>
<feature type="turn" evidence="11">
    <location>
        <begin position="278"/>
        <end position="280"/>
    </location>
</feature>
<feature type="turn" evidence="13">
    <location>
        <begin position="282"/>
        <end position="284"/>
    </location>
</feature>
<feature type="turn" evidence="11">
    <location>
        <begin position="286"/>
        <end position="289"/>
    </location>
</feature>
<feature type="helix" evidence="11">
    <location>
        <begin position="290"/>
        <end position="293"/>
    </location>
</feature>
<feature type="helix" evidence="11">
    <location>
        <begin position="296"/>
        <end position="298"/>
    </location>
</feature>
<feature type="helix" evidence="11">
    <location>
        <begin position="303"/>
        <end position="307"/>
    </location>
</feature>
<feature type="turn" evidence="12">
    <location>
        <begin position="322"/>
        <end position="328"/>
    </location>
</feature>
<feature type="helix" evidence="11">
    <location>
        <begin position="346"/>
        <end position="348"/>
    </location>
</feature>
<organism>
    <name type="scientific">Sus scrofa</name>
    <name type="common">Pig</name>
    <dbReference type="NCBI Taxonomy" id="9823"/>
    <lineage>
        <taxon>Eukaryota</taxon>
        <taxon>Metazoa</taxon>
        <taxon>Chordata</taxon>
        <taxon>Craniata</taxon>
        <taxon>Vertebrata</taxon>
        <taxon>Euteleostomi</taxon>
        <taxon>Mammalia</taxon>
        <taxon>Eutheria</taxon>
        <taxon>Laurasiatheria</taxon>
        <taxon>Artiodactyla</taxon>
        <taxon>Suina</taxon>
        <taxon>Suidae</taxon>
        <taxon>Sus</taxon>
    </lineage>
</organism>
<name>KAPCA_PIG</name>
<evidence type="ECO:0000250" key="1">
    <source>
        <dbReference type="UniProtKB" id="P00517"/>
    </source>
</evidence>
<evidence type="ECO:0000250" key="2">
    <source>
        <dbReference type="UniProtKB" id="P05132"/>
    </source>
</evidence>
<evidence type="ECO:0000250" key="3">
    <source>
        <dbReference type="UniProtKB" id="P17612"/>
    </source>
</evidence>
<evidence type="ECO:0000250" key="4">
    <source>
        <dbReference type="UniProtKB" id="P27791"/>
    </source>
</evidence>
<evidence type="ECO:0000255" key="5">
    <source>
        <dbReference type="PROSITE-ProRule" id="PRU00159"/>
    </source>
</evidence>
<evidence type="ECO:0000255" key="6">
    <source>
        <dbReference type="PROSITE-ProRule" id="PRU00618"/>
    </source>
</evidence>
<evidence type="ECO:0000255" key="7">
    <source>
        <dbReference type="PROSITE-ProRule" id="PRU10027"/>
    </source>
</evidence>
<evidence type="ECO:0000269" key="8">
    <source>
    </source>
</evidence>
<evidence type="ECO:0000269" key="9">
    <source>
    </source>
</evidence>
<evidence type="ECO:0000305" key="10"/>
<evidence type="ECO:0007829" key="11">
    <source>
        <dbReference type="PDB" id="1CDK"/>
    </source>
</evidence>
<evidence type="ECO:0007829" key="12">
    <source>
        <dbReference type="PDB" id="1CMK"/>
    </source>
</evidence>
<evidence type="ECO:0007829" key="13">
    <source>
        <dbReference type="PDB" id="1CTP"/>
    </source>
</evidence>